<proteinExistence type="evidence at protein level"/>
<comment type="function">
    <text evidence="1">3'-5'-exoribonuclease that specifically recognizes RNAs polyuridylated at their 3' end and mediates their degradation. Component of an exosome-independent RNA degradation pathway that mediates degradation of cytoplasmic mRNAs that have been deadenylated and subsequently uridylated at their 3'.</text>
</comment>
<comment type="cofactor">
    <cofactor evidence="1">
        <name>Mg(2+)</name>
        <dbReference type="ChEBI" id="CHEBI:18420"/>
    </cofactor>
    <cofactor evidence="1">
        <name>Mn(2+)</name>
        <dbReference type="ChEBI" id="CHEBI:29035"/>
    </cofactor>
</comment>
<comment type="subcellular location">
    <subcellularLocation>
        <location evidence="1">Cytoplasm</location>
    </subcellularLocation>
    <subcellularLocation>
        <location evidence="1">Cytoplasm</location>
        <location evidence="1">P-body</location>
    </subcellularLocation>
</comment>
<comment type="PTM">
    <text evidence="3">Cleaved by caspase ced-3 in vitro.</text>
</comment>
<comment type="disruption phenotype">
    <text evidence="3">RNAi-mediated knockdown in a ced-3 and ain-1 double mutant background reduces the percentage of animals with developmental defects including production of ectopic seam cells.</text>
</comment>
<comment type="similarity">
    <text evidence="1">Belongs to the RNR ribonuclease family. DIS3L2 subfamily.</text>
</comment>
<organism>
    <name type="scientific">Caenorhabditis elegans</name>
    <dbReference type="NCBI Taxonomy" id="6239"/>
    <lineage>
        <taxon>Eukaryota</taxon>
        <taxon>Metazoa</taxon>
        <taxon>Ecdysozoa</taxon>
        <taxon>Nematoda</taxon>
        <taxon>Chromadorea</taxon>
        <taxon>Rhabditida</taxon>
        <taxon>Rhabditina</taxon>
        <taxon>Rhabditomorpha</taxon>
        <taxon>Rhabditoidea</taxon>
        <taxon>Rhabditidae</taxon>
        <taxon>Peloderinae</taxon>
        <taxon>Caenorhabditis</taxon>
    </lineage>
</organism>
<feature type="chain" id="PRO_0000166425" description="DIS3-like exonuclease 2">
    <location>
        <begin position="1"/>
        <end position="848"/>
    </location>
</feature>
<feature type="region of interest" description="Disordered" evidence="2">
    <location>
        <begin position="153"/>
        <end position="173"/>
    </location>
</feature>
<feature type="binding site" evidence="1">
    <location>
        <position position="345"/>
    </location>
    <ligand>
        <name>Mg(2+)</name>
        <dbReference type="ChEBI" id="CHEBI:18420"/>
    </ligand>
</feature>
<feature type="binding site" evidence="1">
    <location>
        <position position="354"/>
    </location>
    <ligand>
        <name>Mg(2+)</name>
        <dbReference type="ChEBI" id="CHEBI:18420"/>
    </ligand>
</feature>
<feature type="site" description="Important for catalytic activity" evidence="1">
    <location>
        <position position="353"/>
    </location>
</feature>
<reference key="1">
    <citation type="journal article" date="1998" name="Science">
        <title>Genome sequence of the nematode C. elegans: a platform for investigating biology.</title>
        <authorList>
            <consortium name="The C. elegans sequencing consortium"/>
        </authorList>
    </citation>
    <scope>NUCLEOTIDE SEQUENCE [LARGE SCALE GENOMIC DNA]</scope>
    <source>
        <strain>Bristol N2</strain>
    </source>
</reference>
<reference key="2">
    <citation type="journal article" date="2014" name="Elife">
        <title>CED-3 caspase acts with miRNAs to regulate non-apoptotic gene expression dynamics for robust development in C. elegans.</title>
        <authorList>
            <person name="Weaver B.P."/>
            <person name="Zabinsky R."/>
            <person name="Weaver Y.M."/>
            <person name="Lee E.S."/>
            <person name="Xue D."/>
            <person name="Han M."/>
        </authorList>
    </citation>
    <scope>PROTEOLYTIC CLEAVAGE</scope>
    <scope>DISRUPTION PHENOTYPE</scope>
</reference>
<name>DI3L2_CAEEL</name>
<evidence type="ECO:0000255" key="1">
    <source>
        <dbReference type="HAMAP-Rule" id="MF_03045"/>
    </source>
</evidence>
<evidence type="ECO:0000256" key="2">
    <source>
        <dbReference type="SAM" id="MobiDB-lite"/>
    </source>
</evidence>
<evidence type="ECO:0000269" key="3">
    <source>
    </source>
</evidence>
<evidence type="ECO:0000303" key="4">
    <source>
    </source>
</evidence>
<evidence type="ECO:0000312" key="5">
    <source>
        <dbReference type="WormBase" id="F48E8.6"/>
    </source>
</evidence>
<dbReference type="EC" id="3.1.13.-" evidence="1"/>
<dbReference type="EMBL" id="FO081421">
    <property type="protein sequence ID" value="CCD71518.1"/>
    <property type="molecule type" value="Genomic_DNA"/>
</dbReference>
<dbReference type="PIR" id="T16409">
    <property type="entry name" value="T16409"/>
</dbReference>
<dbReference type="RefSeq" id="NP_498160.2">
    <property type="nucleotide sequence ID" value="NM_065759.7"/>
</dbReference>
<dbReference type="SMR" id="Q09568"/>
<dbReference type="BioGRID" id="40977">
    <property type="interactions" value="5"/>
</dbReference>
<dbReference type="FunCoup" id="Q09568">
    <property type="interactions" value="3293"/>
</dbReference>
<dbReference type="STRING" id="6239.F48E8.6.1"/>
<dbReference type="PaxDb" id="6239-F48E8.6"/>
<dbReference type="PeptideAtlas" id="Q09568"/>
<dbReference type="EnsemblMetazoa" id="F48E8.6.1">
    <property type="protein sequence ID" value="F48E8.6.1"/>
    <property type="gene ID" value="WBGene00018612"/>
</dbReference>
<dbReference type="GeneID" id="175748"/>
<dbReference type="KEGG" id="cel:CELE_F48E8.6"/>
<dbReference type="UCSC" id="F48E8.6">
    <property type="organism name" value="c. elegans"/>
</dbReference>
<dbReference type="AGR" id="WB:WBGene00018612"/>
<dbReference type="CTD" id="175748"/>
<dbReference type="WormBase" id="F48E8.6">
    <property type="protein sequence ID" value="CE45000"/>
    <property type="gene ID" value="WBGene00018612"/>
    <property type="gene designation" value="disl-2"/>
</dbReference>
<dbReference type="eggNOG" id="KOG2102">
    <property type="taxonomic scope" value="Eukaryota"/>
</dbReference>
<dbReference type="GeneTree" id="ENSGT00530000063106"/>
<dbReference type="HOGENOM" id="CLU_002333_5_2_1"/>
<dbReference type="InParanoid" id="Q09568"/>
<dbReference type="OMA" id="YCKSIAG"/>
<dbReference type="OrthoDB" id="372421at2759"/>
<dbReference type="PhylomeDB" id="Q09568"/>
<dbReference type="PRO" id="PR:Q09568"/>
<dbReference type="Proteomes" id="UP000001940">
    <property type="component" value="Chromosome III"/>
</dbReference>
<dbReference type="Bgee" id="WBGene00018612">
    <property type="expression patterns" value="Expressed in germ line (C elegans) and 4 other cell types or tissues"/>
</dbReference>
<dbReference type="GO" id="GO:0000932">
    <property type="term" value="C:P-body"/>
    <property type="evidence" value="ECO:0000318"/>
    <property type="project" value="GO_Central"/>
</dbReference>
<dbReference type="GO" id="GO:0000175">
    <property type="term" value="F:3'-5'-RNA exonuclease activity"/>
    <property type="evidence" value="ECO:0000318"/>
    <property type="project" value="GO_Central"/>
</dbReference>
<dbReference type="GO" id="GO:0046872">
    <property type="term" value="F:metal ion binding"/>
    <property type="evidence" value="ECO:0007669"/>
    <property type="project" value="UniProtKB-KW"/>
</dbReference>
<dbReference type="GO" id="GO:0003723">
    <property type="term" value="F:RNA binding"/>
    <property type="evidence" value="ECO:0007669"/>
    <property type="project" value="UniProtKB-KW"/>
</dbReference>
<dbReference type="GO" id="GO:0010587">
    <property type="term" value="P:miRNA catabolic process"/>
    <property type="evidence" value="ECO:0000318"/>
    <property type="project" value="GO_Central"/>
</dbReference>
<dbReference type="GO" id="GO:0006402">
    <property type="term" value="P:mRNA catabolic process"/>
    <property type="evidence" value="ECO:0000318"/>
    <property type="project" value="GO_Central"/>
</dbReference>
<dbReference type="GO" id="GO:0000956">
    <property type="term" value="P:nuclear-transcribed mRNA catabolic process"/>
    <property type="evidence" value="ECO:0007669"/>
    <property type="project" value="UniProtKB-UniRule"/>
</dbReference>
<dbReference type="GO" id="GO:1990074">
    <property type="term" value="P:polyuridylation-dependent mRNA catabolic process"/>
    <property type="evidence" value="ECO:0007669"/>
    <property type="project" value="UniProtKB-UniRule"/>
</dbReference>
<dbReference type="GO" id="GO:0042659">
    <property type="term" value="P:regulation of cell fate specification"/>
    <property type="evidence" value="ECO:0000316"/>
    <property type="project" value="UniProtKB"/>
</dbReference>
<dbReference type="GO" id="GO:0040034">
    <property type="term" value="P:regulation of development, heterochronic"/>
    <property type="evidence" value="ECO:0000316"/>
    <property type="project" value="UniProtKB"/>
</dbReference>
<dbReference type="FunFam" id="2.40.50.700:FF:000010">
    <property type="match status" value="1"/>
</dbReference>
<dbReference type="FunFam" id="2.40.50.690:FF:000007">
    <property type="entry name" value="DIS3-like exonuclease 2"/>
    <property type="match status" value="1"/>
</dbReference>
<dbReference type="Gene3D" id="2.40.50.690">
    <property type="match status" value="1"/>
</dbReference>
<dbReference type="Gene3D" id="2.40.50.700">
    <property type="match status" value="1"/>
</dbReference>
<dbReference type="Gene3D" id="2.40.50.140">
    <property type="entry name" value="Nucleic acid-binding proteins"/>
    <property type="match status" value="1"/>
</dbReference>
<dbReference type="HAMAP" id="MF_03045">
    <property type="entry name" value="DIS3L2"/>
    <property type="match status" value="1"/>
</dbReference>
<dbReference type="InterPro" id="IPR041505">
    <property type="entry name" value="Dis3_CSD2"/>
</dbReference>
<dbReference type="InterPro" id="IPR028591">
    <property type="entry name" value="DIS3L2"/>
</dbReference>
<dbReference type="InterPro" id="IPR041093">
    <property type="entry name" value="Dis3l2-like_C"/>
</dbReference>
<dbReference type="InterPro" id="IPR012340">
    <property type="entry name" value="NA-bd_OB-fold"/>
</dbReference>
<dbReference type="InterPro" id="IPR001900">
    <property type="entry name" value="RNase_II/R"/>
</dbReference>
<dbReference type="InterPro" id="IPR022966">
    <property type="entry name" value="RNase_II/R_CS"/>
</dbReference>
<dbReference type="InterPro" id="IPR050180">
    <property type="entry name" value="RNR_Ribonuclease"/>
</dbReference>
<dbReference type="InterPro" id="IPR033771">
    <property type="entry name" value="Rrp44_CSD1"/>
</dbReference>
<dbReference type="PANTHER" id="PTHR23355:SF9">
    <property type="entry name" value="DIS3-LIKE EXONUCLEASE 2"/>
    <property type="match status" value="1"/>
</dbReference>
<dbReference type="PANTHER" id="PTHR23355">
    <property type="entry name" value="RIBONUCLEASE"/>
    <property type="match status" value="1"/>
</dbReference>
<dbReference type="Pfam" id="PF17877">
    <property type="entry name" value="Dis3l2_C_term"/>
    <property type="match status" value="1"/>
</dbReference>
<dbReference type="Pfam" id="PF17849">
    <property type="entry name" value="OB_Dis3"/>
    <property type="match status" value="1"/>
</dbReference>
<dbReference type="Pfam" id="PF00773">
    <property type="entry name" value="RNB"/>
    <property type="match status" value="1"/>
</dbReference>
<dbReference type="Pfam" id="PF17216">
    <property type="entry name" value="Rrp44_CSD1"/>
    <property type="match status" value="1"/>
</dbReference>
<dbReference type="SMART" id="SM00955">
    <property type="entry name" value="RNB"/>
    <property type="match status" value="1"/>
</dbReference>
<dbReference type="SUPFAM" id="SSF50249">
    <property type="entry name" value="Nucleic acid-binding proteins"/>
    <property type="match status" value="3"/>
</dbReference>
<dbReference type="PROSITE" id="PS01175">
    <property type="entry name" value="RIBONUCLEASE_II"/>
    <property type="match status" value="1"/>
</dbReference>
<keyword id="KW-0963">Cytoplasm</keyword>
<keyword id="KW-0269">Exonuclease</keyword>
<keyword id="KW-0378">Hydrolase</keyword>
<keyword id="KW-0460">Magnesium</keyword>
<keyword id="KW-0464">Manganese</keyword>
<keyword id="KW-0479">Metal-binding</keyword>
<keyword id="KW-0540">Nuclease</keyword>
<keyword id="KW-1185">Reference proteome</keyword>
<keyword id="KW-0694">RNA-binding</keyword>
<protein>
    <recommendedName>
        <fullName evidence="1">DIS3-like exonuclease 2</fullName>
        <ecNumber evidence="1">3.1.13.-</ecNumber>
    </recommendedName>
</protein>
<accession>Q09568</accession>
<sequence length="848" mass="96531">MSAVESPVIVTEPGSLKPQGLTQTATGGKFGAAATVKTTPTKAKPYVKPQNANNLQNNFNPRKIFTEYISKEETDAGIEDGSMFKGVLRINPKNYQECFLDHPKGTNHPDVLVLGQDRNRAMQGDVVAVKIKPKEDWLVNYVEYVKWWAEHKKGDRNSGKTDNNSPNKTEKRCLRNEIQDNGVTSDEVPDSCLITIGAIVHILEKKHFRVAAGKLQLMPNSANPNVLFVATDSRVPRILIPKSDVDKEFFSRPKDFERFLYTAKITDWRAESVYADGRLVKLLGMSGEIDTETERIVYEHQIDHREFSDECLESLPITTAENWKVPDAEFEYRRDFRSDIVFTIDPKTARDLDDALHAKHIDDCDGKGTPGLEIGVHIADVTFFLKEGTELDKWASERGNSTYLSQTVIPMLPRILCEQLCSLNPGVDRLSFSTVFKMSYEAELYDVWFGRSVIRSRVKLAYEHAQDFIENPEKDFTCDELPDISDGNTPFEIKEKTLMLHRIAQVLRQKREDSGALRIELPRLKFALDEDKKPQGVSIYEIKDSNKLVEEFMLLANMEVAKKIAENFPEHALLRNHPPPKEKMIKDVAEQCARIGFPLDGRTSGLLSTSLRKYQGKSRLDMCIRQVISSLTIKPMQQAKYFCTFEMPLSFYHHFALNVDHYTHFTSPIRRYPDVIVHRQLAAALGYNERSERVPEEIQEICTRCNDTKLASKEASDESAMLYFGVFIHQTGPMKCQAVVLGVMDLSFDVLIVEYGVVKRVYVDKMKRDFNKSTEKLTIYWPADPNAESGNREEFSSSIQMCNVVYVILVPYKSIEVSATIVRPSLEQRNILKSTLKDMKETGSTILQ</sequence>
<gene>
    <name evidence="4 5" type="primary">disl-2</name>
    <name evidence="5" type="ORF">F48E8.6</name>
</gene>